<proteinExistence type="inferred from homology"/>
<organism>
    <name type="scientific">Marinobacter nauticus (strain ATCC 700491 / DSM 11845 / VT8)</name>
    <name type="common">Marinobacter aquaeolei</name>
    <dbReference type="NCBI Taxonomy" id="351348"/>
    <lineage>
        <taxon>Bacteria</taxon>
        <taxon>Pseudomonadati</taxon>
        <taxon>Pseudomonadota</taxon>
        <taxon>Gammaproteobacteria</taxon>
        <taxon>Pseudomonadales</taxon>
        <taxon>Marinobacteraceae</taxon>
        <taxon>Marinobacter</taxon>
    </lineage>
</organism>
<keyword id="KW-0963">Cytoplasm</keyword>
<keyword id="KW-0570">Pentose shunt</keyword>
<keyword id="KW-0704">Schiff base</keyword>
<keyword id="KW-0808">Transferase</keyword>
<sequence>MNSKLEQLKTMTTVVADTGDIDAIRHWRPEDATTNPSLLLKAAASEAYRPMLEKAVAHAAQHGGSDAEQLTVATDMLAVLAGKEILGLIPGVVSTEVDARLSFDTSATLERARRLVDFYDRQGVDTNRVLIKIASTWEGIRAAEQLEKEGIRCNLTLLFSFVQAVACAQAGVHLISPFVGRILDWHLASSGRDSYPAEEDPGVFSVSRIYNYYKANGFNTVVMGASFRNTGEIEMLAGCDRLTISPALLQDLKDDQGTLARKLNPETASSPDKPGQINEKQFRWESNEDAMATEKLADGIRRFAADQIELEHRVRQLAQAA</sequence>
<accession>A1U1Y1</accession>
<comment type="function">
    <text evidence="2">Transaldolase is important for the balance of metabolites in the pentose-phosphate pathway.</text>
</comment>
<comment type="catalytic activity">
    <reaction evidence="2">
        <text>D-sedoheptulose 7-phosphate + D-glyceraldehyde 3-phosphate = D-erythrose 4-phosphate + beta-D-fructose 6-phosphate</text>
        <dbReference type="Rhea" id="RHEA:17053"/>
        <dbReference type="ChEBI" id="CHEBI:16897"/>
        <dbReference type="ChEBI" id="CHEBI:57483"/>
        <dbReference type="ChEBI" id="CHEBI:57634"/>
        <dbReference type="ChEBI" id="CHEBI:59776"/>
        <dbReference type="EC" id="2.2.1.2"/>
    </reaction>
</comment>
<comment type="pathway">
    <text evidence="2">Carbohydrate degradation; pentose phosphate pathway; D-glyceraldehyde 3-phosphate and beta-D-fructose 6-phosphate from D-ribose 5-phosphate and D-xylulose 5-phosphate (non-oxidative stage): step 2/3.</text>
</comment>
<comment type="subunit">
    <text evidence="1">Homodimer.</text>
</comment>
<comment type="subcellular location">
    <subcellularLocation>
        <location evidence="2">Cytoplasm</location>
    </subcellularLocation>
</comment>
<comment type="similarity">
    <text evidence="2">Belongs to the transaldolase family. Type 1 subfamily.</text>
</comment>
<protein>
    <recommendedName>
        <fullName evidence="2">Transaldolase</fullName>
        <ecNumber evidence="2">2.2.1.2</ecNumber>
    </recommendedName>
</protein>
<evidence type="ECO:0000250" key="1"/>
<evidence type="ECO:0000255" key="2">
    <source>
        <dbReference type="HAMAP-Rule" id="MF_00492"/>
    </source>
</evidence>
<dbReference type="EC" id="2.2.1.2" evidence="2"/>
<dbReference type="EMBL" id="CP000514">
    <property type="protein sequence ID" value="ABM19000.1"/>
    <property type="molecule type" value="Genomic_DNA"/>
</dbReference>
<dbReference type="RefSeq" id="WP_011785393.1">
    <property type="nucleotide sequence ID" value="NC_008740.1"/>
</dbReference>
<dbReference type="SMR" id="A1U1Y1"/>
<dbReference type="STRING" id="351348.Maqu_1919"/>
<dbReference type="KEGG" id="maq:Maqu_1919"/>
<dbReference type="eggNOG" id="COG0176">
    <property type="taxonomic scope" value="Bacteria"/>
</dbReference>
<dbReference type="HOGENOM" id="CLU_047470_0_1_6"/>
<dbReference type="OrthoDB" id="9809101at2"/>
<dbReference type="UniPathway" id="UPA00115">
    <property type="reaction ID" value="UER00414"/>
</dbReference>
<dbReference type="Proteomes" id="UP000000998">
    <property type="component" value="Chromosome"/>
</dbReference>
<dbReference type="GO" id="GO:0005829">
    <property type="term" value="C:cytosol"/>
    <property type="evidence" value="ECO:0007669"/>
    <property type="project" value="TreeGrafter"/>
</dbReference>
<dbReference type="GO" id="GO:0004801">
    <property type="term" value="F:transaldolase activity"/>
    <property type="evidence" value="ECO:0000250"/>
    <property type="project" value="UniProtKB"/>
</dbReference>
<dbReference type="GO" id="GO:0005975">
    <property type="term" value="P:carbohydrate metabolic process"/>
    <property type="evidence" value="ECO:0007669"/>
    <property type="project" value="InterPro"/>
</dbReference>
<dbReference type="GO" id="GO:0006098">
    <property type="term" value="P:pentose-phosphate shunt"/>
    <property type="evidence" value="ECO:0007669"/>
    <property type="project" value="UniProtKB-UniRule"/>
</dbReference>
<dbReference type="CDD" id="cd00957">
    <property type="entry name" value="Transaldolase_TalAB"/>
    <property type="match status" value="1"/>
</dbReference>
<dbReference type="FunFam" id="3.20.20.70:FF:000002">
    <property type="entry name" value="Transaldolase"/>
    <property type="match status" value="1"/>
</dbReference>
<dbReference type="Gene3D" id="3.20.20.70">
    <property type="entry name" value="Aldolase class I"/>
    <property type="match status" value="1"/>
</dbReference>
<dbReference type="HAMAP" id="MF_00492">
    <property type="entry name" value="Transaldolase_1"/>
    <property type="match status" value="1"/>
</dbReference>
<dbReference type="InterPro" id="IPR013785">
    <property type="entry name" value="Aldolase_TIM"/>
</dbReference>
<dbReference type="InterPro" id="IPR001585">
    <property type="entry name" value="TAL/FSA"/>
</dbReference>
<dbReference type="InterPro" id="IPR004730">
    <property type="entry name" value="Transaldolase_1"/>
</dbReference>
<dbReference type="InterPro" id="IPR018225">
    <property type="entry name" value="Transaldolase_AS"/>
</dbReference>
<dbReference type="NCBIfam" id="NF009001">
    <property type="entry name" value="PRK12346.1"/>
    <property type="match status" value="1"/>
</dbReference>
<dbReference type="NCBIfam" id="TIGR00874">
    <property type="entry name" value="talAB"/>
    <property type="match status" value="1"/>
</dbReference>
<dbReference type="PANTHER" id="PTHR10683">
    <property type="entry name" value="TRANSALDOLASE"/>
    <property type="match status" value="1"/>
</dbReference>
<dbReference type="PANTHER" id="PTHR10683:SF18">
    <property type="entry name" value="TRANSALDOLASE"/>
    <property type="match status" value="1"/>
</dbReference>
<dbReference type="Pfam" id="PF00923">
    <property type="entry name" value="TAL_FSA"/>
    <property type="match status" value="1"/>
</dbReference>
<dbReference type="SUPFAM" id="SSF51569">
    <property type="entry name" value="Aldolase"/>
    <property type="match status" value="1"/>
</dbReference>
<dbReference type="PROSITE" id="PS01054">
    <property type="entry name" value="TRANSALDOLASE_1"/>
    <property type="match status" value="1"/>
</dbReference>
<dbReference type="PROSITE" id="PS00958">
    <property type="entry name" value="TRANSALDOLASE_2"/>
    <property type="match status" value="1"/>
</dbReference>
<gene>
    <name evidence="2" type="primary">tal</name>
    <name type="ordered locus">Maqu_1919</name>
</gene>
<reference key="1">
    <citation type="journal article" date="2011" name="Appl. Environ. Microbiol.">
        <title>Genomic potential of Marinobacter aquaeolei, a biogeochemical 'opportunitroph'.</title>
        <authorList>
            <person name="Singer E."/>
            <person name="Webb E.A."/>
            <person name="Nelson W.C."/>
            <person name="Heidelberg J.F."/>
            <person name="Ivanova N."/>
            <person name="Pati A."/>
            <person name="Edwards K.J."/>
        </authorList>
    </citation>
    <scope>NUCLEOTIDE SEQUENCE [LARGE SCALE GENOMIC DNA]</scope>
    <source>
        <strain>ATCC 700491 / DSM 11845 / VT8</strain>
    </source>
</reference>
<name>TAL_MARN8</name>
<feature type="chain" id="PRO_1000014502" description="Transaldolase">
    <location>
        <begin position="1"/>
        <end position="321"/>
    </location>
</feature>
<feature type="active site" description="Schiff-base intermediate with substrate" evidence="2">
    <location>
        <position position="132"/>
    </location>
</feature>